<organism>
    <name type="scientific">Human cytomegalovirus (strain Merlin)</name>
    <name type="common">HHV-5</name>
    <name type="synonym">Human herpesvirus 5</name>
    <dbReference type="NCBI Taxonomy" id="295027"/>
    <lineage>
        <taxon>Viruses</taxon>
        <taxon>Duplodnaviria</taxon>
        <taxon>Heunggongvirae</taxon>
        <taxon>Peploviricota</taxon>
        <taxon>Herviviricetes</taxon>
        <taxon>Herpesvirales</taxon>
        <taxon>Orthoherpesviridae</taxon>
        <taxon>Betaherpesvirinae</taxon>
        <taxon>Cytomegalovirus</taxon>
        <taxon>Cytomegalovirus humanbeta5</taxon>
        <taxon>Human cytomegalovirus</taxon>
    </lineage>
</organism>
<dbReference type="EMBL" id="AY446894">
    <property type="protein sequence ID" value="AAR31663.1"/>
    <property type="molecule type" value="Genomic_DNA"/>
</dbReference>
<dbReference type="RefSeq" id="YP_081559.1">
    <property type="nucleotide sequence ID" value="NC_006273.2"/>
</dbReference>
<dbReference type="GlyCosmos" id="Q6SW31">
    <property type="glycosylation" value="8 sites, No reported glycans"/>
</dbReference>
<dbReference type="DNASU" id="3077520"/>
<dbReference type="GeneID" id="3077520"/>
<dbReference type="KEGG" id="vg:3077520"/>
<dbReference type="Reactome" id="R-HSA-9610379">
    <property type="pathway name" value="HCMV Late Events"/>
</dbReference>
<dbReference type="Proteomes" id="UP000000938">
    <property type="component" value="Segment"/>
</dbReference>
<dbReference type="GO" id="GO:0033644">
    <property type="term" value="C:host cell membrane"/>
    <property type="evidence" value="ECO:0007669"/>
    <property type="project" value="UniProtKB-SubCell"/>
</dbReference>
<dbReference type="GO" id="GO:0016020">
    <property type="term" value="C:membrane"/>
    <property type="evidence" value="ECO:0007669"/>
    <property type="project" value="UniProtKB-KW"/>
</dbReference>
<feature type="signal peptide" evidence="1">
    <location>
        <begin position="1"/>
        <end position="25"/>
    </location>
</feature>
<feature type="chain" id="PRO_0000418242" description="Membrane protein UL120">
    <location>
        <begin position="26"/>
        <end position="201"/>
    </location>
</feature>
<feature type="topological domain" description="Extracellular" evidence="1">
    <location>
        <begin position="26"/>
        <end position="170"/>
    </location>
</feature>
<feature type="transmembrane region" description="Helical" evidence="1">
    <location>
        <begin position="171"/>
        <end position="191"/>
    </location>
</feature>
<feature type="topological domain" description="Cytoplasmic" evidence="1">
    <location>
        <begin position="192"/>
        <end position="201"/>
    </location>
</feature>
<feature type="glycosylation site" description="N-linked (GlcNAc...) asparagine; by host" evidence="1">
    <location>
        <position position="47"/>
    </location>
</feature>
<feature type="glycosylation site" description="N-linked (GlcNAc...) asparagine; by host" evidence="1">
    <location>
        <position position="50"/>
    </location>
</feature>
<feature type="glycosylation site" description="N-linked (GlcNAc...) asparagine; by host" evidence="1">
    <location>
        <position position="56"/>
    </location>
</feature>
<feature type="glycosylation site" description="N-linked (GlcNAc...) asparagine; by host" evidence="1">
    <location>
        <position position="85"/>
    </location>
</feature>
<feature type="glycosylation site" description="N-linked (GlcNAc...) asparagine; by host" evidence="1">
    <location>
        <position position="96"/>
    </location>
</feature>
<feature type="glycosylation site" description="N-linked (GlcNAc...) asparagine; by host" evidence="1">
    <location>
        <position position="114"/>
    </location>
</feature>
<feature type="glycosylation site" description="N-linked (GlcNAc...) asparagine; by host" evidence="1">
    <location>
        <position position="123"/>
    </location>
</feature>
<feature type="glycosylation site" description="N-linked (GlcNAc...) asparagine; by host" evidence="1">
    <location>
        <position position="138"/>
    </location>
</feature>
<sequence length="201" mass="23134">MYRAGVTLLVVAVVSFGRWDSVTVATTIRVGWWYEPQVKMAYIYEHNDTNLTIFCNTTAYDSPFLASGMMIVLPHRTQFLTRKVNYSEDMENIKQNYTHQLTHMLTGEPGTYVNGSVTCWGSNGTFGAGTFIVRSMVNKTAGNTNTFIHFVEDSELVENPAYFRRSDHRAFMIVILTQVVFVVFIINASFIWSWTFRRHKR</sequence>
<proteinExistence type="inferred from homology"/>
<name>UL120_HCMVM</name>
<reference key="1">
    <citation type="journal article" date="2004" name="J. Gen. Virol.">
        <title>Genetic content of wild-type human cytomegalovirus.</title>
        <authorList>
            <person name="Dolan A."/>
            <person name="Cunningham C."/>
            <person name="Hector R.D."/>
            <person name="Hassan-Walker A.F."/>
            <person name="Lee L."/>
            <person name="Addison C."/>
            <person name="Dargan D.J."/>
            <person name="McGeoch D.J."/>
            <person name="Gatherer D."/>
            <person name="Emery V.C."/>
            <person name="Griffiths P.D."/>
            <person name="Sinzger C."/>
            <person name="McSharry B.P."/>
            <person name="Wilkinson G.W.G."/>
            <person name="Davison A.J."/>
        </authorList>
    </citation>
    <scope>NUCLEOTIDE SEQUENCE [LARGE SCALE GENOMIC DNA]</scope>
</reference>
<keyword id="KW-0325">Glycoprotein</keyword>
<keyword id="KW-1043">Host membrane</keyword>
<keyword id="KW-0472">Membrane</keyword>
<keyword id="KW-1185">Reference proteome</keyword>
<keyword id="KW-0732">Signal</keyword>
<keyword id="KW-0812">Transmembrane</keyword>
<keyword id="KW-1133">Transmembrane helix</keyword>
<organismHost>
    <name type="scientific">Homo sapiens</name>
    <name type="common">Human</name>
    <dbReference type="NCBI Taxonomy" id="9606"/>
</organismHost>
<comment type="subcellular location">
    <subcellularLocation>
        <location evidence="2">Host membrane</location>
        <topology evidence="2">Single-pass membrane protein</topology>
    </subcellularLocation>
</comment>
<comment type="similarity">
    <text evidence="2">Belongs to the HHV-5 UL120 protein family.</text>
</comment>
<gene>
    <name type="primary">UL120</name>
</gene>
<accession>Q6SW31</accession>
<accession>D2K3R9</accession>
<evidence type="ECO:0000255" key="1"/>
<evidence type="ECO:0000305" key="2"/>
<protein>
    <recommendedName>
        <fullName>Membrane protein UL120</fullName>
    </recommendedName>
</protein>